<reference key="1">
    <citation type="journal article" date="2010" name="Mol. Phylogenet. Evol.">
        <title>Evolution of Conus peptide toxins: analysis of Conus californicus Reeve, 1844.</title>
        <authorList>
            <person name="Biggs J.S."/>
            <person name="Watkins M."/>
            <person name="Puillandre N."/>
            <person name="Ownby J.P."/>
            <person name="Lopez-Vera E."/>
            <person name="Christensen S."/>
            <person name="Moreno K.J."/>
            <person name="Bernaldez J."/>
            <person name="Licea-Navarro A."/>
            <person name="Corneli P.S."/>
            <person name="Olivera B.M."/>
        </authorList>
    </citation>
    <scope>NUCLEOTIDE SEQUENCE [GENOMIC DNA]</scope>
</reference>
<accession>D6C4H8</accession>
<sequence>MTTLGMTMLVLLLLLPLATCLGDGERSPWDSLLRALRSDPQACEPTISGGEMICRDEVCASTGCNCGYNIAKAHCYCACP</sequence>
<organism>
    <name type="scientific">Californiconus californicus</name>
    <name type="common">California cone</name>
    <name type="synonym">Conus californicus</name>
    <dbReference type="NCBI Taxonomy" id="1736779"/>
    <lineage>
        <taxon>Eukaryota</taxon>
        <taxon>Metazoa</taxon>
        <taxon>Spiralia</taxon>
        <taxon>Lophotrochozoa</taxon>
        <taxon>Mollusca</taxon>
        <taxon>Gastropoda</taxon>
        <taxon>Caenogastropoda</taxon>
        <taxon>Neogastropoda</taxon>
        <taxon>Conoidea</taxon>
        <taxon>Conidae</taxon>
        <taxon>Californiconus</taxon>
    </lineage>
</organism>
<comment type="subcellular location">
    <subcellularLocation>
        <location evidence="1">Secreted</location>
    </subcellularLocation>
</comment>
<comment type="tissue specificity">
    <text>Expressed by the venom duct.</text>
</comment>
<comment type="domain">
    <text>The cysteine framework is XXII (C-C-C-C-C-C-C-C).</text>
</comment>
<comment type="PTM">
    <text evidence="3">Contains 4 disulfide bonds.</text>
</comment>
<feature type="signal peptide" evidence="2">
    <location>
        <begin position="1"/>
        <end position="20"/>
    </location>
</feature>
<feature type="propeptide" id="PRO_0000414941" evidence="1">
    <location>
        <begin position="21"/>
        <end position="36"/>
    </location>
</feature>
<feature type="peptide" id="PRO_0000414942" description="Conotoxin Cl10.1">
    <location>
        <begin position="38"/>
        <end position="80"/>
    </location>
</feature>
<protein>
    <recommendedName>
        <fullName>Conotoxin Cl10.1</fullName>
    </recommendedName>
</protein>
<name>CUM1_CONCL</name>
<keyword id="KW-1015">Disulfide bond</keyword>
<keyword id="KW-0528">Neurotoxin</keyword>
<keyword id="KW-0964">Secreted</keyword>
<keyword id="KW-0732">Signal</keyword>
<keyword id="KW-0800">Toxin</keyword>
<dbReference type="EMBL" id="FJ959120">
    <property type="protein sequence ID" value="ADB93090.1"/>
    <property type="molecule type" value="Genomic_DNA"/>
</dbReference>
<dbReference type="ConoServer" id="4006">
    <property type="toxin name" value="Cal12.10 precursor"/>
</dbReference>
<dbReference type="GO" id="GO:0005576">
    <property type="term" value="C:extracellular region"/>
    <property type="evidence" value="ECO:0007669"/>
    <property type="project" value="UniProtKB-SubCell"/>
</dbReference>
<dbReference type="GO" id="GO:0090729">
    <property type="term" value="F:toxin activity"/>
    <property type="evidence" value="ECO:0007669"/>
    <property type="project" value="UniProtKB-KW"/>
</dbReference>
<evidence type="ECO:0000250" key="1"/>
<evidence type="ECO:0000255" key="2"/>
<evidence type="ECO:0000305" key="3"/>
<proteinExistence type="inferred from homology"/>